<organismHost>
    <name type="scientific">Capra hircus</name>
    <name type="common">Goat</name>
    <dbReference type="NCBI Taxonomy" id="9925"/>
</organismHost>
<organismHost>
    <name type="scientific">Homo sapiens</name>
    <name type="common">Human</name>
    <dbReference type="NCBI Taxonomy" id="9606"/>
</organismHost>
<organismHost>
    <name type="scientific">Ovis aries</name>
    <name type="common">Sheep</name>
    <dbReference type="NCBI Taxonomy" id="9940"/>
</organismHost>
<sequence length="73" mass="7623">GHAAANCALARVATALTRRVPASRHGLAEGGTPPWTLLLAVAAVTVLGVVAVSLLRRALRVRYRFARPAALRA</sequence>
<reference key="1">
    <citation type="journal article" date="1994" name="J. Virol.">
        <title>Homologs of vascular endothelial growth factor are encoded by the poxvirus orf virus.</title>
        <authorList>
            <person name="Lyttle D.J."/>
            <person name="Fraser K.M."/>
            <person name="Fleming S.B."/>
            <person name="Mercer A.A."/>
            <person name="Robinson A.J."/>
        </authorList>
    </citation>
    <scope>NUCLEOTIDE SEQUENCE [GENOMIC DNA]</scope>
</reference>
<proteinExistence type="inferred from homology"/>
<name>F9_ORFN2</name>
<feature type="chain" id="PRO_0000099495" description="Protein F9 homolog">
    <location>
        <begin position="1" status="less than"/>
        <end position="73"/>
    </location>
</feature>
<feature type="topological domain" description="Virion surface" evidence="2">
    <location>
        <begin position="1"/>
        <end position="34"/>
    </location>
</feature>
<feature type="transmembrane region" description="Helical" evidence="2">
    <location>
        <begin position="35"/>
        <end position="55"/>
    </location>
</feature>
<feature type="topological domain" description="Intravirion" evidence="2">
    <location>
        <begin position="56"/>
        <end position="73"/>
    </location>
</feature>
<feature type="non-terminal residue">
    <location>
        <position position="1"/>
    </location>
</feature>
<protein>
    <recommendedName>
        <fullName>Protein F9 homolog</fullName>
    </recommendedName>
</protein>
<organism>
    <name type="scientific">Orf virus (strain NZ2)</name>
    <name type="common">OV NZ-2</name>
    <dbReference type="NCBI Taxonomy" id="10259"/>
    <lineage>
        <taxon>Viruses</taxon>
        <taxon>Varidnaviria</taxon>
        <taxon>Bamfordvirae</taxon>
        <taxon>Nucleocytoviricota</taxon>
        <taxon>Pokkesviricetes</taxon>
        <taxon>Chitovirales</taxon>
        <taxon>Poxviridae</taxon>
        <taxon>Chordopoxvirinae</taxon>
        <taxon>Parapoxvirus</taxon>
        <taxon>Orf virus</taxon>
    </lineage>
</organism>
<comment type="subcellular location">
    <subcellularLocation>
        <location evidence="3">Virion membrane</location>
        <topology evidence="3">Single-pass membrane protein</topology>
    </subcellularLocation>
    <text evidence="1">Component of the mature virion (MV) membrane. The mature virion is located in the cytoplasm of infected cells and is probably released by cell lysis (By similarity).</text>
</comment>
<comment type="similarity">
    <text evidence="3">Belongs to the chordopoxvirinae L1 protein family.</text>
</comment>
<keyword id="KW-0472">Membrane</keyword>
<keyword id="KW-0812">Transmembrane</keyword>
<keyword id="KW-1133">Transmembrane helix</keyword>
<keyword id="KW-0261">Viral envelope protein</keyword>
<keyword id="KW-0946">Virion</keyword>
<gene>
    <name type="ORF">A3R</name>
</gene>
<accession>P52586</accession>
<dbReference type="EMBL" id="S67520">
    <property type="protein sequence ID" value="AAB29219.1"/>
    <property type="molecule type" value="Genomic_DNA"/>
</dbReference>
<dbReference type="PIR" id="A49530">
    <property type="entry name" value="A49530"/>
</dbReference>
<dbReference type="GO" id="GO:0016020">
    <property type="term" value="C:membrane"/>
    <property type="evidence" value="ECO:0007669"/>
    <property type="project" value="UniProtKB-KW"/>
</dbReference>
<dbReference type="GO" id="GO:0019031">
    <property type="term" value="C:viral envelope"/>
    <property type="evidence" value="ECO:0007669"/>
    <property type="project" value="UniProtKB-KW"/>
</dbReference>
<dbReference type="GO" id="GO:0055036">
    <property type="term" value="C:virion membrane"/>
    <property type="evidence" value="ECO:0007669"/>
    <property type="project" value="UniProtKB-SubCell"/>
</dbReference>
<evidence type="ECO:0000250" key="1"/>
<evidence type="ECO:0000255" key="2"/>
<evidence type="ECO:0000305" key="3"/>